<comment type="function">
    <text evidence="1">Two distinct, membrane-bound, FAD-containing enzymes are responsible for the catalysis of fumarate and succinate interconversion; fumarate reductase is used in anaerobic growth, and succinate dehydrogenase is used in aerobic growth. Anchors the catalytic components of the fumarate reductase complex to the cell inner membrane, binds quinones.</text>
</comment>
<comment type="subunit">
    <text evidence="1">Part of an enzyme complex containing four subunits: a flavoprotein (FrdA), an iron-sulfur protein (FrdB), and two hydrophobic anchor proteins (FrdC and FrdD).</text>
</comment>
<comment type="subcellular location">
    <subcellularLocation>
        <location evidence="1">Cell inner membrane</location>
        <topology evidence="1">Multi-pass membrane protein</topology>
    </subcellularLocation>
</comment>
<comment type="similarity">
    <text evidence="1">Belongs to the FrdD family.</text>
</comment>
<accession>C5BDL4</accession>
<keyword id="KW-0997">Cell inner membrane</keyword>
<keyword id="KW-1003">Cell membrane</keyword>
<keyword id="KW-0472">Membrane</keyword>
<keyword id="KW-0812">Transmembrane</keyword>
<keyword id="KW-1133">Transmembrane helix</keyword>
<dbReference type="EMBL" id="CP001600">
    <property type="protein sequence ID" value="ACR67630.1"/>
    <property type="molecule type" value="Genomic_DNA"/>
</dbReference>
<dbReference type="SMR" id="C5BDL4"/>
<dbReference type="STRING" id="67780.B6E78_12730"/>
<dbReference type="KEGG" id="eic:NT01EI_0389"/>
<dbReference type="HOGENOM" id="CLU_168367_0_0_6"/>
<dbReference type="Proteomes" id="UP000001485">
    <property type="component" value="Chromosome"/>
</dbReference>
<dbReference type="GO" id="GO:0045283">
    <property type="term" value="C:fumarate reductase complex"/>
    <property type="evidence" value="ECO:0007669"/>
    <property type="project" value="UniProtKB-UniRule"/>
</dbReference>
<dbReference type="GO" id="GO:0005886">
    <property type="term" value="C:plasma membrane"/>
    <property type="evidence" value="ECO:0007669"/>
    <property type="project" value="UniProtKB-SubCell"/>
</dbReference>
<dbReference type="GO" id="GO:0000104">
    <property type="term" value="F:succinate dehydrogenase activity"/>
    <property type="evidence" value="ECO:0007669"/>
    <property type="project" value="UniProtKB-UniRule"/>
</dbReference>
<dbReference type="GO" id="GO:0006106">
    <property type="term" value="P:fumarate metabolic process"/>
    <property type="evidence" value="ECO:0007669"/>
    <property type="project" value="InterPro"/>
</dbReference>
<dbReference type="CDD" id="cd00547">
    <property type="entry name" value="QFR_TypeD_subunitD"/>
    <property type="match status" value="1"/>
</dbReference>
<dbReference type="Gene3D" id="1.20.1300.10">
    <property type="entry name" value="Fumarate reductase/succinate dehydrogenase, transmembrane subunit"/>
    <property type="match status" value="1"/>
</dbReference>
<dbReference type="HAMAP" id="MF_00709">
    <property type="entry name" value="Fumarate_red_D"/>
    <property type="match status" value="1"/>
</dbReference>
<dbReference type="InterPro" id="IPR003418">
    <property type="entry name" value="Fumarate_red_D"/>
</dbReference>
<dbReference type="InterPro" id="IPR034804">
    <property type="entry name" value="SQR/QFR_C/D"/>
</dbReference>
<dbReference type="NCBIfam" id="NF003977">
    <property type="entry name" value="PRK05470.1-1"/>
    <property type="match status" value="1"/>
</dbReference>
<dbReference type="Pfam" id="PF02313">
    <property type="entry name" value="Fumarate_red_D"/>
    <property type="match status" value="1"/>
</dbReference>
<dbReference type="PIRSF" id="PIRSF000179">
    <property type="entry name" value="FrdD"/>
    <property type="match status" value="1"/>
</dbReference>
<dbReference type="SUPFAM" id="SSF81343">
    <property type="entry name" value="Fumarate reductase respiratory complex transmembrane subunits"/>
    <property type="match status" value="1"/>
</dbReference>
<organism>
    <name type="scientific">Edwardsiella ictaluri (strain 93-146)</name>
    <dbReference type="NCBI Taxonomy" id="634503"/>
    <lineage>
        <taxon>Bacteria</taxon>
        <taxon>Pseudomonadati</taxon>
        <taxon>Pseudomonadota</taxon>
        <taxon>Gammaproteobacteria</taxon>
        <taxon>Enterobacterales</taxon>
        <taxon>Hafniaceae</taxon>
        <taxon>Edwardsiella</taxon>
    </lineage>
</organism>
<sequence>MMNNKVYKRSDEPVFWGLFGAGGMWGAIFAPAVILIVGILLPLGMFPDALTFERALSFSQSIIGRIFWLLMIILPLWCGLHRLHHMMHDLKIHVPASSWVFYGLAAILSVVALIGIFTL</sequence>
<evidence type="ECO:0000255" key="1">
    <source>
        <dbReference type="HAMAP-Rule" id="MF_00709"/>
    </source>
</evidence>
<reference key="1">
    <citation type="submission" date="2009-03" db="EMBL/GenBank/DDBJ databases">
        <title>Complete genome sequence of Edwardsiella ictaluri 93-146.</title>
        <authorList>
            <person name="Williams M.L."/>
            <person name="Gillaspy A.F."/>
            <person name="Dyer D.W."/>
            <person name="Thune R.L."/>
            <person name="Waldbieser G.C."/>
            <person name="Schuster S.C."/>
            <person name="Gipson J."/>
            <person name="Zaitshik J."/>
            <person name="Landry C."/>
            <person name="Lawrence M.L."/>
        </authorList>
    </citation>
    <scope>NUCLEOTIDE SEQUENCE [LARGE SCALE GENOMIC DNA]</scope>
    <source>
        <strain>93-146</strain>
    </source>
</reference>
<proteinExistence type="inferred from homology"/>
<name>FRDD_EDWI9</name>
<protein>
    <recommendedName>
        <fullName evidence="1">Fumarate reductase subunit D</fullName>
    </recommendedName>
    <alternativeName>
        <fullName evidence="1">Fumarate reductase 13 kDa hydrophobic protein</fullName>
    </alternativeName>
    <alternativeName>
        <fullName evidence="1">Quinol-fumarate reductase subunit D</fullName>
        <shortName evidence="1">QFR subunit D</shortName>
    </alternativeName>
</protein>
<gene>
    <name evidence="1" type="primary">frdD</name>
    <name type="ordered locus">NT01EI_0389</name>
</gene>
<feature type="chain" id="PRO_1000212649" description="Fumarate reductase subunit D">
    <location>
        <begin position="1"/>
        <end position="119"/>
    </location>
</feature>
<feature type="transmembrane region" description="Helical" evidence="1">
    <location>
        <begin position="26"/>
        <end position="46"/>
    </location>
</feature>
<feature type="transmembrane region" description="Helical" evidence="1">
    <location>
        <begin position="61"/>
        <end position="81"/>
    </location>
</feature>
<feature type="transmembrane region" description="Helical" evidence="1">
    <location>
        <begin position="99"/>
        <end position="119"/>
    </location>
</feature>